<organism>
    <name type="scientific">Homo sapiens</name>
    <name type="common">Human</name>
    <dbReference type="NCBI Taxonomy" id="9606"/>
    <lineage>
        <taxon>Eukaryota</taxon>
        <taxon>Metazoa</taxon>
        <taxon>Chordata</taxon>
        <taxon>Craniata</taxon>
        <taxon>Vertebrata</taxon>
        <taxon>Euteleostomi</taxon>
        <taxon>Mammalia</taxon>
        <taxon>Eutheria</taxon>
        <taxon>Euarchontoglires</taxon>
        <taxon>Primates</taxon>
        <taxon>Haplorrhini</taxon>
        <taxon>Catarrhini</taxon>
        <taxon>Hominidae</taxon>
        <taxon>Homo</taxon>
    </lineage>
</organism>
<proteinExistence type="evidence at protein level"/>
<name>PPIF_HUMAN</name>
<comment type="function">
    <text evidence="3 7 8 11 12">PPIase that catalyzes the cis-trans isomerization of proline imidic peptide bonds in oligopeptides and may therefore assist protein folding (PubMed:20676357). Involved in regulation of the mitochondrial permeability transition pore (mPTP) (PubMed:26387735). It is proposed that its association with the mPTP is masking a binding site for inhibiting inorganic phosphate (Pi) and promotes the open probability of the mPTP leading to apoptosis or necrosis; the requirement of the PPIase activity for this function is debated (PubMed:26387735). In cooperation with mitochondrial p53/TP53 is involved in activating oxidative stress-induced necrosis (PubMed:22726440). Involved in modulation of mitochondrial membrane F(1)F(0) ATP synthase activity and regulation of mitochondrial matrix adenine nucleotide levels (By similarity). Has anti-apoptotic activity independently of mPTP and in cooperation with BCL2 inhibits cytochrome c-dependent apoptosis (PubMed:19228691).</text>
</comment>
<comment type="catalytic activity">
    <reaction evidence="8">
        <text>[protein]-peptidylproline (omega=180) = [protein]-peptidylproline (omega=0)</text>
        <dbReference type="Rhea" id="RHEA:16237"/>
        <dbReference type="Rhea" id="RHEA-COMP:10747"/>
        <dbReference type="Rhea" id="RHEA-COMP:10748"/>
        <dbReference type="ChEBI" id="CHEBI:83833"/>
        <dbReference type="ChEBI" id="CHEBI:83834"/>
        <dbReference type="EC" id="5.2.1.8"/>
    </reaction>
</comment>
<comment type="activity regulation">
    <text evidence="8">Inhibited by cyclosporin A (CsA) (PubMed:20676357). Is displaced by CsA from the mPTP leading to a lower open probability of the mPTP.</text>
</comment>
<comment type="subunit">
    <text evidence="1 2 3 7 9 11 12 13">Associates with the mitochondrial membrane ATP synthase F(1)F(0) ATP synthase; the association is increased by inorganic phosphate (Pi) and decreased by cyclosporin A (CsA) (By similarity). Interacts with ATP5F1B; ATP5PD and ATP5PO (By similarity). Interacts with SLC25A3; the interaction is impaired by CsA (By similarity). Interacts with BCL2; the interaction is impaired by CsA (PubMed:19228691). Interacts with TP53; the association implicates preferentially tetrameric TP53, is induced by oxidative stress and is impaired by CsA (PubMed:22726440). Interacts with C1QBP (PubMed:20950273). Interacts with MCUR1 (PubMed:26976564). Component of the mitochondrial permeability transition pore complex (mPTPC), at least composed of SPG7, VDAC1 and PPIF (PubMed:26387735). Interacts with SPG7 (PubMed:26387735).</text>
</comment>
<comment type="interaction">
    <interactant intactId="EBI-5544229">
        <id>P30405</id>
    </interactant>
    <interactant intactId="EBI-743598">
        <id>Q9NYB9</id>
        <label>ABI2</label>
    </interactant>
    <organismsDiffer>false</organismsDiffer>
    <experiments>4</experiments>
</comment>
<comment type="interaction">
    <interactant intactId="EBI-5544229">
        <id>P30405</id>
    </interactant>
    <interactant intactId="EBI-11096309">
        <id>Q9NYB9-2</id>
        <label>ABI2</label>
    </interactant>
    <organismsDiffer>false</organismsDiffer>
    <experiments>3</experiments>
</comment>
<comment type="interaction">
    <interactant intactId="EBI-5544229">
        <id>P30405</id>
    </interactant>
    <interactant intactId="EBI-11522760">
        <id>Q6RW13-2</id>
        <label>AGTRAP</label>
    </interactant>
    <organismsDiffer>false</organismsDiffer>
    <experiments>3</experiments>
</comment>
<comment type="interaction">
    <interactant intactId="EBI-5544229">
        <id>P30405</id>
    </interactant>
    <interactant intactId="EBI-821758">
        <id>PRO_0000000092</id>
        <label>APP</label>
        <dbReference type="UniProtKB" id="P05067"/>
    </interactant>
    <organismsDiffer>false</organismsDiffer>
    <experiments>2</experiments>
</comment>
<comment type="interaction">
    <interactant intactId="EBI-5544229">
        <id>P30405</id>
    </interactant>
    <interactant intactId="EBI-638194">
        <id>P53365</id>
        <label>ARFIP2</label>
    </interactant>
    <organismsDiffer>false</organismsDiffer>
    <experiments>3</experiments>
</comment>
<comment type="interaction">
    <interactant intactId="EBI-5544229">
        <id>P30405</id>
    </interactant>
    <interactant intactId="EBI-744695">
        <id>Q8N9N5</id>
        <label>BANP</label>
    </interactant>
    <organismsDiffer>false</organismsDiffer>
    <experiments>3</experiments>
</comment>
<comment type="interaction">
    <interactant intactId="EBI-5544229">
        <id>P30405</id>
    </interactant>
    <interactant intactId="EBI-7062247">
        <id>Q9UHD4</id>
        <label>CIDEB</label>
    </interactant>
    <organismsDiffer>false</organismsDiffer>
    <experiments>3</experiments>
</comment>
<comment type="interaction">
    <interactant intactId="EBI-5544229">
        <id>P30405</id>
    </interactant>
    <interactant intactId="EBI-2548702">
        <id>Q96DZ9</id>
        <label>CMTM5</label>
    </interactant>
    <organismsDiffer>false</organismsDiffer>
    <experiments>3</experiments>
</comment>
<comment type="interaction">
    <interactant intactId="EBI-5544229">
        <id>P30405</id>
    </interactant>
    <interactant intactId="EBI-14240149">
        <id>B3EWG3</id>
        <label>FAM25A</label>
    </interactant>
    <organismsDiffer>false</organismsDiffer>
    <experiments>3</experiments>
</comment>
<comment type="interaction">
    <interactant intactId="EBI-5544229">
        <id>P30405</id>
    </interactant>
    <interactant intactId="EBI-3918971">
        <id>Q9Y680</id>
        <label>FKBP7</label>
    </interactant>
    <organismsDiffer>false</organismsDiffer>
    <experiments>3</experiments>
</comment>
<comment type="interaction">
    <interactant intactId="EBI-5544229">
        <id>P30405</id>
    </interactant>
    <interactant intactId="EBI-739552">
        <id>P43364</id>
        <label>MAGEA11</label>
    </interactant>
    <organismsDiffer>false</organismsDiffer>
    <experiments>3</experiments>
</comment>
<comment type="interaction">
    <interactant intactId="EBI-5544229">
        <id>P30405</id>
    </interactant>
    <interactant intactId="EBI-17263240">
        <id>P15941-11</id>
        <label>MUC1</label>
    </interactant>
    <organismsDiffer>false</organismsDiffer>
    <experiments>3</experiments>
</comment>
<comment type="interaction">
    <interactant intactId="EBI-5544229">
        <id>P30405</id>
    </interactant>
    <interactant intactId="EBI-13360404">
        <id>Q04118</id>
        <label>PRB3</label>
    </interactant>
    <organismsDiffer>false</organismsDiffer>
    <experiments>3</experiments>
</comment>
<comment type="interaction">
    <interactant intactId="EBI-5544229">
        <id>P30405</id>
    </interactant>
    <interactant intactId="EBI-9071725">
        <id>P08247</id>
        <label>SYP</label>
    </interactant>
    <organismsDiffer>false</organismsDiffer>
    <experiments>5</experiments>
</comment>
<comment type="interaction">
    <interactant intactId="EBI-5544229">
        <id>P30405</id>
    </interactant>
    <interactant intactId="EBI-2800683">
        <id>Q16563</id>
        <label>SYPL1</label>
    </interactant>
    <organismsDiffer>false</organismsDiffer>
    <experiments>3</experiments>
</comment>
<comment type="interaction">
    <interactant intactId="EBI-5544229">
        <id>P30405</id>
    </interactant>
    <interactant intactId="EBI-366083">
        <id>P04637</id>
        <label>TP53</label>
    </interactant>
    <organismsDiffer>false</organismsDiffer>
    <experiments>4</experiments>
</comment>
<comment type="interaction">
    <interactant intactId="EBI-5544229">
        <id>P30405</id>
    </interactant>
    <interactant intactId="EBI-2799703">
        <id>O95070</id>
        <label>YIF1A</label>
    </interactant>
    <organismsDiffer>false</organismsDiffer>
    <experiments>3</experiments>
</comment>
<comment type="subcellular location">
    <subcellularLocation>
        <location evidence="6">Mitochondrion matrix</location>
    </subcellularLocation>
</comment>
<comment type="alternative products">
    <event type="alternative splicing"/>
    <isoform>
        <id>P30405-1</id>
        <name>1</name>
        <sequence type="displayed"/>
    </isoform>
    <isoform>
        <id>P30405-2</id>
        <name>2</name>
        <sequence type="described" ref="VSP_056286"/>
    </isoform>
</comment>
<comment type="PTM">
    <text evidence="3">Acetylated at Lys-167; deacetylated at Lys-167 by SIRT3.</text>
</comment>
<comment type="similarity">
    <text evidence="16">Belongs to the cyclophilin-type PPIase family.</text>
</comment>
<feature type="transit peptide" description="Mitochondrion" evidence="4">
    <location>
        <begin position="1"/>
        <end position="29"/>
    </location>
</feature>
<feature type="chain" id="PRO_0000025489" description="Peptidyl-prolyl cis-trans isomerase F, mitochondrial">
    <location>
        <begin position="30"/>
        <end position="207"/>
    </location>
</feature>
<feature type="domain" description="PPIase cyclophilin-type" evidence="5">
    <location>
        <begin position="49"/>
        <end position="205"/>
    </location>
</feature>
<feature type="modified residue" description="N6-acetyllysine; alternate" evidence="3">
    <location>
        <position position="67"/>
    </location>
</feature>
<feature type="modified residue" description="N6-succinyllysine; alternate" evidence="3">
    <location>
        <position position="67"/>
    </location>
</feature>
<feature type="modified residue" description="N6-succinyllysine" evidence="3">
    <location>
        <position position="86"/>
    </location>
</feature>
<feature type="modified residue" description="N6-acetyllysine" evidence="3">
    <location>
        <position position="167"/>
    </location>
</feature>
<feature type="modified residue" description="N6-succinyllysine" evidence="3">
    <location>
        <position position="175"/>
    </location>
</feature>
<feature type="modified residue" description="N6-succinyllysine" evidence="3">
    <location>
        <position position="190"/>
    </location>
</feature>
<feature type="modified residue" description="S-nitrosocysteine" evidence="3">
    <location>
        <position position="203"/>
    </location>
</feature>
<feature type="splice variant" id="VSP_056286" description="In isoform 2." evidence="14 15">
    <original>VLSMANAGPNTNGSQFFICTIKTDWLDGKHVVFGHVKEGMDVVKKIESFGSKSGRTSKKIVITDCGQLS</original>
    <variation>WMASMLCSVTSKRAWTS</variation>
    <location>
        <begin position="139"/>
        <end position="207"/>
    </location>
</feature>
<feature type="mutagenesis site" description="Blocks Ca(2+)-induced mPTP opening and reduces hydrogen peroxide-induced cell death." evidence="10">
    <original>C</original>
    <variation>S</variation>
    <location>
        <position position="203"/>
    </location>
</feature>
<feature type="strand" evidence="19">
    <location>
        <begin position="47"/>
        <end position="54"/>
    </location>
</feature>
<feature type="strand" evidence="19">
    <location>
        <begin position="57"/>
        <end position="66"/>
    </location>
</feature>
<feature type="turn" evidence="19">
    <location>
        <begin position="68"/>
        <end position="70"/>
    </location>
</feature>
<feature type="helix" evidence="19">
    <location>
        <begin position="72"/>
        <end position="83"/>
    </location>
</feature>
<feature type="turn" evidence="19">
    <location>
        <begin position="84"/>
        <end position="86"/>
    </location>
</feature>
<feature type="strand" evidence="19">
    <location>
        <begin position="94"/>
        <end position="99"/>
    </location>
</feature>
<feature type="turn" evidence="19">
    <location>
        <begin position="100"/>
        <end position="102"/>
    </location>
</feature>
<feature type="strand" evidence="19">
    <location>
        <begin position="103"/>
        <end position="106"/>
    </location>
</feature>
<feature type="turn" evidence="19">
    <location>
        <begin position="109"/>
        <end position="111"/>
    </location>
</feature>
<feature type="strand" evidence="19">
    <location>
        <begin position="112"/>
        <end position="115"/>
    </location>
</feature>
<feature type="strand" evidence="18">
    <location>
        <begin position="120"/>
        <end position="123"/>
    </location>
</feature>
<feature type="strand" evidence="19">
    <location>
        <begin position="139"/>
        <end position="142"/>
    </location>
</feature>
<feature type="strand" evidence="17">
    <location>
        <begin position="144"/>
        <end position="146"/>
    </location>
</feature>
<feature type="strand" evidence="19">
    <location>
        <begin position="150"/>
        <end position="152"/>
    </location>
</feature>
<feature type="strand" evidence="19">
    <location>
        <begin position="154"/>
        <end position="159"/>
    </location>
</feature>
<feature type="helix" evidence="19">
    <location>
        <begin position="162"/>
        <end position="164"/>
    </location>
</feature>
<feature type="turn" evidence="19">
    <location>
        <begin position="165"/>
        <end position="167"/>
    </location>
</feature>
<feature type="strand" evidence="19">
    <location>
        <begin position="170"/>
        <end position="176"/>
    </location>
</feature>
<feature type="helix" evidence="19">
    <location>
        <begin position="178"/>
        <end position="186"/>
    </location>
</feature>
<feature type="strand" evidence="19">
    <location>
        <begin position="198"/>
        <end position="205"/>
    </location>
</feature>
<dbReference type="EC" id="5.2.1.8" evidence="8"/>
<dbReference type="EMBL" id="M80254">
    <property type="protein sequence ID" value="AAA58434.1"/>
    <property type="molecule type" value="mRNA"/>
</dbReference>
<dbReference type="EMBL" id="AK296669">
    <property type="protein sequence ID" value="BAG59266.1"/>
    <property type="molecule type" value="mRNA"/>
</dbReference>
<dbReference type="EMBL" id="AL133481">
    <property type="status" value="NOT_ANNOTATED_CDS"/>
    <property type="molecule type" value="Genomic_DNA"/>
</dbReference>
<dbReference type="EMBL" id="AL391665">
    <property type="status" value="NOT_ANNOTATED_CDS"/>
    <property type="molecule type" value="Genomic_DNA"/>
</dbReference>
<dbReference type="EMBL" id="CH471083">
    <property type="protein sequence ID" value="EAW54645.1"/>
    <property type="molecule type" value="Genomic_DNA"/>
</dbReference>
<dbReference type="EMBL" id="BC005020">
    <property type="protein sequence ID" value="AAH05020.1"/>
    <property type="molecule type" value="mRNA"/>
</dbReference>
<dbReference type="EMBL" id="BC110299">
    <property type="protein sequence ID" value="AAI10300.1"/>
    <property type="molecule type" value="mRNA"/>
</dbReference>
<dbReference type="CCDS" id="CCDS7358.1">
    <molecule id="P30405-1"/>
</dbReference>
<dbReference type="PIR" id="A41581">
    <property type="entry name" value="A41581"/>
</dbReference>
<dbReference type="RefSeq" id="NP_005720.1">
    <molecule id="P30405-1"/>
    <property type="nucleotide sequence ID" value="NM_005729.4"/>
</dbReference>
<dbReference type="PDB" id="2BIT">
    <property type="method" value="X-ray"/>
    <property type="resolution" value="1.71 A"/>
    <property type="chains" value="X=43-207"/>
</dbReference>
<dbReference type="PDB" id="2BIU">
    <property type="method" value="X-ray"/>
    <property type="resolution" value="1.71 A"/>
    <property type="chains" value="X=43-207"/>
</dbReference>
<dbReference type="PDB" id="2Z6W">
    <property type="method" value="X-ray"/>
    <property type="resolution" value="0.96 A"/>
    <property type="chains" value="A/B=44-207"/>
</dbReference>
<dbReference type="PDB" id="3QYU">
    <property type="method" value="X-ray"/>
    <property type="resolution" value="1.54 A"/>
    <property type="chains" value="A=44-207"/>
</dbReference>
<dbReference type="PDB" id="3R49">
    <property type="method" value="X-ray"/>
    <property type="resolution" value="1.77 A"/>
    <property type="chains" value="A=43-207"/>
</dbReference>
<dbReference type="PDB" id="3R4G">
    <property type="method" value="X-ray"/>
    <property type="resolution" value="1.05 A"/>
    <property type="chains" value="A=43-207"/>
</dbReference>
<dbReference type="PDB" id="3R54">
    <property type="method" value="X-ray"/>
    <property type="resolution" value="1.35 A"/>
    <property type="chains" value="A=43-207"/>
</dbReference>
<dbReference type="PDB" id="3R56">
    <property type="method" value="X-ray"/>
    <property type="resolution" value="1.40 A"/>
    <property type="chains" value="A=43-207"/>
</dbReference>
<dbReference type="PDB" id="3R57">
    <property type="method" value="X-ray"/>
    <property type="resolution" value="1.71 A"/>
    <property type="chains" value="A=43-207"/>
</dbReference>
<dbReference type="PDB" id="3R59">
    <property type="method" value="X-ray"/>
    <property type="resolution" value="1.10 A"/>
    <property type="chains" value="A=43-207"/>
</dbReference>
<dbReference type="PDB" id="3RCF">
    <property type="method" value="X-ray"/>
    <property type="resolution" value="1.15 A"/>
    <property type="chains" value="A=43-207"/>
</dbReference>
<dbReference type="PDB" id="3RCG">
    <property type="method" value="X-ray"/>
    <property type="resolution" value="0.97 A"/>
    <property type="chains" value="A=43-207"/>
</dbReference>
<dbReference type="PDB" id="3RCI">
    <property type="method" value="X-ray"/>
    <property type="resolution" value="1.44 A"/>
    <property type="chains" value="X=43-207"/>
</dbReference>
<dbReference type="PDB" id="3RCK">
    <property type="method" value="X-ray"/>
    <property type="resolution" value="1.26 A"/>
    <property type="chains" value="X=43-207"/>
</dbReference>
<dbReference type="PDB" id="3RCL">
    <property type="method" value="X-ray"/>
    <property type="resolution" value="1.70 A"/>
    <property type="chains" value="A=43-207"/>
</dbReference>
<dbReference type="PDB" id="3RD9">
    <property type="method" value="X-ray"/>
    <property type="resolution" value="1.40 A"/>
    <property type="chains" value="X=43-207"/>
</dbReference>
<dbReference type="PDB" id="3RDA">
    <property type="method" value="X-ray"/>
    <property type="resolution" value="1.07 A"/>
    <property type="chains" value="X=43-207"/>
</dbReference>
<dbReference type="PDB" id="3RDB">
    <property type="method" value="X-ray"/>
    <property type="resolution" value="1.55 A"/>
    <property type="chains" value="A=43-207"/>
</dbReference>
<dbReference type="PDB" id="3RDC">
    <property type="method" value="X-ray"/>
    <property type="resolution" value="1.94 A"/>
    <property type="chains" value="A=43-207"/>
</dbReference>
<dbReference type="PDB" id="4J58">
    <property type="method" value="X-ray"/>
    <property type="resolution" value="1.28 A"/>
    <property type="chains" value="A=44-207"/>
</dbReference>
<dbReference type="PDB" id="4J59">
    <property type="method" value="X-ray"/>
    <property type="resolution" value="1.92 A"/>
    <property type="chains" value="A=44-207"/>
</dbReference>
<dbReference type="PDB" id="4J5A">
    <property type="method" value="X-ray"/>
    <property type="resolution" value="1.58 A"/>
    <property type="chains" value="X=44-207"/>
</dbReference>
<dbReference type="PDB" id="4J5B">
    <property type="method" value="X-ray"/>
    <property type="resolution" value="2.01 A"/>
    <property type="chains" value="A=44-207"/>
</dbReference>
<dbReference type="PDB" id="4J5C">
    <property type="method" value="X-ray"/>
    <property type="resolution" value="1.03 A"/>
    <property type="chains" value="X=44-207"/>
</dbReference>
<dbReference type="PDB" id="4J5D">
    <property type="method" value="X-ray"/>
    <property type="resolution" value="1.32 A"/>
    <property type="chains" value="X=44-207"/>
</dbReference>
<dbReference type="PDB" id="4J5E">
    <property type="method" value="X-ray"/>
    <property type="resolution" value="0.99 A"/>
    <property type="chains" value="X=44-207"/>
</dbReference>
<dbReference type="PDB" id="4O8H">
    <property type="method" value="X-ray"/>
    <property type="resolution" value="0.85 A"/>
    <property type="chains" value="A=43-207"/>
</dbReference>
<dbReference type="PDB" id="4O8I">
    <property type="method" value="X-ray"/>
    <property type="resolution" value="1.45 A"/>
    <property type="chains" value="A=43-207"/>
</dbReference>
<dbReference type="PDB" id="4XNC">
    <property type="method" value="X-ray"/>
    <property type="resolution" value="2.23 A"/>
    <property type="chains" value="A=44-207"/>
</dbReference>
<dbReference type="PDB" id="4ZSC">
    <property type="method" value="X-ray"/>
    <property type="resolution" value="1.50 A"/>
    <property type="chains" value="A=44-207"/>
</dbReference>
<dbReference type="PDB" id="4ZSD">
    <property type="method" value="X-ray"/>
    <property type="resolution" value="1.45 A"/>
    <property type="chains" value="A=44-207"/>
</dbReference>
<dbReference type="PDB" id="5A0E">
    <property type="method" value="X-ray"/>
    <property type="resolution" value="1.25 A"/>
    <property type="chains" value="A/B=43-207"/>
</dbReference>
<dbReference type="PDB" id="5CBT">
    <property type="method" value="X-ray"/>
    <property type="resolution" value="1.45 A"/>
    <property type="chains" value="A=44-207"/>
</dbReference>
<dbReference type="PDB" id="5CBU">
    <property type="method" value="X-ray"/>
    <property type="resolution" value="1.40 A"/>
    <property type="chains" value="A=44-207"/>
</dbReference>
<dbReference type="PDB" id="5CBV">
    <property type="method" value="X-ray"/>
    <property type="resolution" value="1.80 A"/>
    <property type="chains" value="A=44-207"/>
</dbReference>
<dbReference type="PDB" id="5CBW">
    <property type="method" value="X-ray"/>
    <property type="resolution" value="1.80 A"/>
    <property type="chains" value="A=44-207"/>
</dbReference>
<dbReference type="PDB" id="5CCN">
    <property type="method" value="X-ray"/>
    <property type="resolution" value="1.80 A"/>
    <property type="chains" value="A=44-207"/>
</dbReference>
<dbReference type="PDB" id="5CCQ">
    <property type="method" value="X-ray"/>
    <property type="resolution" value="1.80 A"/>
    <property type="chains" value="A=44-207"/>
</dbReference>
<dbReference type="PDB" id="5CCR">
    <property type="method" value="X-ray"/>
    <property type="resolution" value="1.90 A"/>
    <property type="chains" value="A=44-207"/>
</dbReference>
<dbReference type="PDB" id="5CCS">
    <property type="method" value="X-ray"/>
    <property type="resolution" value="2.10 A"/>
    <property type="chains" value="X=44-207"/>
</dbReference>
<dbReference type="PDB" id="6R8L">
    <property type="method" value="X-ray"/>
    <property type="resolution" value="1.64 A"/>
    <property type="chains" value="A=44-207"/>
</dbReference>
<dbReference type="PDB" id="6R8O">
    <property type="method" value="X-ray"/>
    <property type="resolution" value="1.36 A"/>
    <property type="chains" value="A=44-207"/>
</dbReference>
<dbReference type="PDB" id="6R8W">
    <property type="method" value="X-ray"/>
    <property type="resolution" value="1.40 A"/>
    <property type="chains" value="A=44-207"/>
</dbReference>
<dbReference type="PDB" id="6R9S">
    <property type="method" value="X-ray"/>
    <property type="resolution" value="2.00 A"/>
    <property type="chains" value="A=44-207"/>
</dbReference>
<dbReference type="PDB" id="6R9U">
    <property type="method" value="X-ray"/>
    <property type="resolution" value="1.26 A"/>
    <property type="chains" value="A=44-207"/>
</dbReference>
<dbReference type="PDB" id="6R9X">
    <property type="method" value="X-ray"/>
    <property type="resolution" value="1.66 A"/>
    <property type="chains" value="A=44-207"/>
</dbReference>
<dbReference type="PDB" id="6RA1">
    <property type="method" value="X-ray"/>
    <property type="resolution" value="2.00 A"/>
    <property type="chains" value="A=44-207"/>
</dbReference>
<dbReference type="PDB" id="6Y3E">
    <property type="method" value="X-ray"/>
    <property type="resolution" value="1.45 A"/>
    <property type="chains" value="A=44-207"/>
</dbReference>
<dbReference type="PDB" id="6YBM">
    <property type="method" value="X-ray"/>
    <property type="resolution" value="1.41 A"/>
    <property type="chains" value="A/B/C=44-207"/>
</dbReference>
<dbReference type="PDB" id="7OGI">
    <property type="method" value="X-ray"/>
    <property type="resolution" value="1.01 A"/>
    <property type="chains" value="A=44-207"/>
</dbReference>
<dbReference type="PDB" id="7PMT">
    <property type="method" value="X-ray"/>
    <property type="resolution" value="0.98 A"/>
    <property type="chains" value="A=44-207"/>
</dbReference>
<dbReference type="PDB" id="7R2H">
    <property type="method" value="X-ray"/>
    <property type="resolution" value="0.79 A"/>
    <property type="chains" value="A=44-207"/>
</dbReference>
<dbReference type="PDB" id="7R2I">
    <property type="method" value="X-ray"/>
    <property type="resolution" value="1.31 A"/>
    <property type="chains" value="A=44-207"/>
</dbReference>
<dbReference type="PDB" id="7R2J">
    <property type="method" value="X-ray"/>
    <property type="resolution" value="1.26 A"/>
    <property type="chains" value="A=44-207"/>
</dbReference>
<dbReference type="PDB" id="7R2L">
    <property type="method" value="X-ray"/>
    <property type="resolution" value="1.10 A"/>
    <property type="chains" value="A=44-207"/>
</dbReference>
<dbReference type="PDB" id="7TGS">
    <property type="method" value="X-ray"/>
    <property type="resolution" value="1.75 A"/>
    <property type="chains" value="X=44-207"/>
</dbReference>
<dbReference type="PDB" id="7TGT">
    <property type="method" value="X-ray"/>
    <property type="resolution" value="1.06 A"/>
    <property type="chains" value="X=45-207"/>
</dbReference>
<dbReference type="PDB" id="7TGU">
    <property type="method" value="X-ray"/>
    <property type="resolution" value="1.21 A"/>
    <property type="chains" value="X=45-207"/>
</dbReference>
<dbReference type="PDB" id="7TGV">
    <property type="method" value="X-ray"/>
    <property type="resolution" value="1.46 A"/>
    <property type="chains" value="X=44-207"/>
</dbReference>
<dbReference type="PDB" id="7TH1">
    <property type="method" value="X-ray"/>
    <property type="resolution" value="1.52 A"/>
    <property type="chains" value="X=45-207"/>
</dbReference>
<dbReference type="PDB" id="7TH6">
    <property type="method" value="X-ray"/>
    <property type="resolution" value="0.97 A"/>
    <property type="chains" value="A=44-207"/>
</dbReference>
<dbReference type="PDB" id="7TH7">
    <property type="method" value="X-ray"/>
    <property type="resolution" value="1.30 A"/>
    <property type="chains" value="A=45-207"/>
</dbReference>
<dbReference type="PDB" id="7THC">
    <property type="method" value="X-ray"/>
    <property type="resolution" value="1.57 A"/>
    <property type="chains" value="A=45-207"/>
</dbReference>
<dbReference type="PDB" id="7THD">
    <property type="method" value="X-ray"/>
    <property type="resolution" value="1.16 A"/>
    <property type="chains" value="A=45-207"/>
</dbReference>
<dbReference type="PDB" id="7THF">
    <property type="method" value="X-ray"/>
    <property type="resolution" value="1.10 A"/>
    <property type="chains" value="A=44-207"/>
</dbReference>
<dbReference type="PDB" id="7ZDN">
    <property type="method" value="X-ray"/>
    <property type="resolution" value="1.55 A"/>
    <property type="chains" value="A/B=44-207"/>
</dbReference>
<dbReference type="PDB" id="8EJX">
    <property type="method" value="X-ray"/>
    <property type="resolution" value="1.65 A"/>
    <property type="chains" value="A=43-207"/>
</dbReference>
<dbReference type="PDB" id="8UC4">
    <property type="method" value="X-ray"/>
    <property type="resolution" value="1.87 A"/>
    <property type="chains" value="X=45-207"/>
</dbReference>
<dbReference type="PDB" id="8UC5">
    <property type="method" value="X-ray"/>
    <property type="resolution" value="1.43 A"/>
    <property type="chains" value="A/B/X=45-207"/>
</dbReference>
<dbReference type="PDBsum" id="2BIT"/>
<dbReference type="PDBsum" id="2BIU"/>
<dbReference type="PDBsum" id="2Z6W"/>
<dbReference type="PDBsum" id="3QYU"/>
<dbReference type="PDBsum" id="3R49"/>
<dbReference type="PDBsum" id="3R4G"/>
<dbReference type="PDBsum" id="3R54"/>
<dbReference type="PDBsum" id="3R56"/>
<dbReference type="PDBsum" id="3R57"/>
<dbReference type="PDBsum" id="3R59"/>
<dbReference type="PDBsum" id="3RCF"/>
<dbReference type="PDBsum" id="3RCG"/>
<dbReference type="PDBsum" id="3RCI"/>
<dbReference type="PDBsum" id="3RCK"/>
<dbReference type="PDBsum" id="3RCL"/>
<dbReference type="PDBsum" id="3RD9"/>
<dbReference type="PDBsum" id="3RDA"/>
<dbReference type="PDBsum" id="3RDB"/>
<dbReference type="PDBsum" id="3RDC"/>
<dbReference type="PDBsum" id="4J58"/>
<dbReference type="PDBsum" id="4J59"/>
<dbReference type="PDBsum" id="4J5A"/>
<dbReference type="PDBsum" id="4J5B"/>
<dbReference type="PDBsum" id="4J5C"/>
<dbReference type="PDBsum" id="4J5D"/>
<dbReference type="PDBsum" id="4J5E"/>
<dbReference type="PDBsum" id="4O8H"/>
<dbReference type="PDBsum" id="4O8I"/>
<dbReference type="PDBsum" id="4XNC"/>
<dbReference type="PDBsum" id="4ZSC"/>
<dbReference type="PDBsum" id="4ZSD"/>
<dbReference type="PDBsum" id="5A0E"/>
<dbReference type="PDBsum" id="5CBT"/>
<dbReference type="PDBsum" id="5CBU"/>
<dbReference type="PDBsum" id="5CBV"/>
<dbReference type="PDBsum" id="5CBW"/>
<dbReference type="PDBsum" id="5CCN"/>
<dbReference type="PDBsum" id="5CCQ"/>
<dbReference type="PDBsum" id="5CCR"/>
<dbReference type="PDBsum" id="5CCS"/>
<dbReference type="PDBsum" id="6R8L"/>
<dbReference type="PDBsum" id="6R8O"/>
<dbReference type="PDBsum" id="6R8W"/>
<dbReference type="PDBsum" id="6R9S"/>
<dbReference type="PDBsum" id="6R9U"/>
<dbReference type="PDBsum" id="6R9X"/>
<dbReference type="PDBsum" id="6RA1"/>
<dbReference type="PDBsum" id="6Y3E"/>
<dbReference type="PDBsum" id="6YBM"/>
<dbReference type="PDBsum" id="7OGI"/>
<dbReference type="PDBsum" id="7PMT"/>
<dbReference type="PDBsum" id="7R2H"/>
<dbReference type="PDBsum" id="7R2I"/>
<dbReference type="PDBsum" id="7R2J"/>
<dbReference type="PDBsum" id="7R2L"/>
<dbReference type="PDBsum" id="7TGS"/>
<dbReference type="PDBsum" id="7TGT"/>
<dbReference type="PDBsum" id="7TGU"/>
<dbReference type="PDBsum" id="7TGV"/>
<dbReference type="PDBsum" id="7TH1"/>
<dbReference type="PDBsum" id="7TH6"/>
<dbReference type="PDBsum" id="7TH7"/>
<dbReference type="PDBsum" id="7THC"/>
<dbReference type="PDBsum" id="7THD"/>
<dbReference type="PDBsum" id="7THF"/>
<dbReference type="PDBsum" id="7ZDN"/>
<dbReference type="PDBsum" id="8EJX"/>
<dbReference type="PDBsum" id="8UC4"/>
<dbReference type="PDBsum" id="8UC5"/>
<dbReference type="BMRB" id="P30405"/>
<dbReference type="SMR" id="P30405"/>
<dbReference type="BioGRID" id="115411">
    <property type="interactions" value="149"/>
</dbReference>
<dbReference type="CORUM" id="P30405"/>
<dbReference type="FunCoup" id="P30405">
    <property type="interactions" value="2031"/>
</dbReference>
<dbReference type="IntAct" id="P30405">
    <property type="interactions" value="43"/>
</dbReference>
<dbReference type="MINT" id="P30405"/>
<dbReference type="STRING" id="9606.ENSP00000225174"/>
<dbReference type="BindingDB" id="P30405"/>
<dbReference type="ChEMBL" id="CHEMBL3325306"/>
<dbReference type="DrugBank" id="DB08168">
    <property type="generic name" value="Coumarin 120"/>
</dbReference>
<dbReference type="DrugBank" id="DB00091">
    <property type="generic name" value="Cyclosporine"/>
</dbReference>
<dbReference type="DrugBank" id="DB00172">
    <property type="generic name" value="Proline"/>
</dbReference>
<dbReference type="DrugBank" id="DB02078">
    <property type="generic name" value="Triglyme"/>
</dbReference>
<dbReference type="TCDB" id="1.A.129.1.1">
    <property type="family name" value="the mitochondrial permeability transition pore (mptp) family"/>
</dbReference>
<dbReference type="GlyGen" id="P30405">
    <property type="glycosylation" value="4 sites, 7 N-linked glycans (3 sites), 1 O-linked glycan (1 site)"/>
</dbReference>
<dbReference type="iPTMnet" id="P30405"/>
<dbReference type="PhosphoSitePlus" id="P30405"/>
<dbReference type="SwissPalm" id="P30405"/>
<dbReference type="BioMuta" id="PPIF"/>
<dbReference type="DMDM" id="231968"/>
<dbReference type="OGP" id="P30405"/>
<dbReference type="jPOST" id="P30405"/>
<dbReference type="MassIVE" id="P30405"/>
<dbReference type="PaxDb" id="9606-ENSP00000225174"/>
<dbReference type="PeptideAtlas" id="P30405"/>
<dbReference type="ProteomicsDB" id="54662">
    <molecule id="P30405-1"/>
</dbReference>
<dbReference type="ProteomicsDB" id="61549"/>
<dbReference type="Pumba" id="P30405"/>
<dbReference type="TopDownProteomics" id="P30405-1">
    <molecule id="P30405-1"/>
</dbReference>
<dbReference type="Antibodypedia" id="29865">
    <property type="antibodies" value="442 antibodies from 34 providers"/>
</dbReference>
<dbReference type="DNASU" id="10105"/>
<dbReference type="Ensembl" id="ENST00000225174.8">
    <molecule id="P30405-1"/>
    <property type="protein sequence ID" value="ENSP00000225174.3"/>
    <property type="gene ID" value="ENSG00000108179.14"/>
</dbReference>
<dbReference type="GeneID" id="10105"/>
<dbReference type="KEGG" id="hsa:10105"/>
<dbReference type="MANE-Select" id="ENST00000225174.8">
    <property type="protein sequence ID" value="ENSP00000225174.3"/>
    <property type="RefSeq nucleotide sequence ID" value="NM_005729.4"/>
    <property type="RefSeq protein sequence ID" value="NP_005720.1"/>
</dbReference>
<dbReference type="UCSC" id="uc001kai.4">
    <molecule id="P30405-1"/>
    <property type="organism name" value="human"/>
</dbReference>
<dbReference type="AGR" id="HGNC:9259"/>
<dbReference type="CTD" id="10105"/>
<dbReference type="DisGeNET" id="10105"/>
<dbReference type="GeneCards" id="PPIF"/>
<dbReference type="HGNC" id="HGNC:9259">
    <property type="gene designation" value="PPIF"/>
</dbReference>
<dbReference type="HPA" id="ENSG00000108179">
    <property type="expression patterns" value="Low tissue specificity"/>
</dbReference>
<dbReference type="MIM" id="604486">
    <property type="type" value="gene"/>
</dbReference>
<dbReference type="neXtProt" id="NX_P30405"/>
<dbReference type="OpenTargets" id="ENSG00000108179"/>
<dbReference type="PharmGKB" id="PA33584"/>
<dbReference type="VEuPathDB" id="HostDB:ENSG00000108179"/>
<dbReference type="eggNOG" id="KOG0865">
    <property type="taxonomic scope" value="Eukaryota"/>
</dbReference>
<dbReference type="GeneTree" id="ENSGT00940000156008"/>
<dbReference type="HOGENOM" id="CLU_012062_4_3_1"/>
<dbReference type="InParanoid" id="P30405"/>
<dbReference type="OMA" id="FKSIVPR"/>
<dbReference type="OrthoDB" id="193499at2759"/>
<dbReference type="PAN-GO" id="P30405">
    <property type="GO annotations" value="8 GO annotations based on evolutionary models"/>
</dbReference>
<dbReference type="PhylomeDB" id="P30405"/>
<dbReference type="TreeFam" id="TF312801"/>
<dbReference type="BRENDA" id="5.2.1.8">
    <property type="organism ID" value="2681"/>
</dbReference>
<dbReference type="PathwayCommons" id="P30405"/>
<dbReference type="SignaLink" id="P30405"/>
<dbReference type="SIGNOR" id="P30405"/>
<dbReference type="BioGRID-ORCS" id="10105">
    <property type="hits" value="14 hits in 1166 CRISPR screens"/>
</dbReference>
<dbReference type="CD-CODE" id="91857CE7">
    <property type="entry name" value="Nucleolus"/>
</dbReference>
<dbReference type="ChiTaRS" id="PPIF">
    <property type="organism name" value="human"/>
</dbReference>
<dbReference type="EvolutionaryTrace" id="P30405"/>
<dbReference type="GeneWiki" id="PPIF"/>
<dbReference type="GenomeRNAi" id="10105"/>
<dbReference type="Pharos" id="P30405">
    <property type="development level" value="Tchem"/>
</dbReference>
<dbReference type="PRO" id="PR:P30405"/>
<dbReference type="Proteomes" id="UP000005640">
    <property type="component" value="Chromosome 10"/>
</dbReference>
<dbReference type="RNAct" id="P30405">
    <property type="molecule type" value="protein"/>
</dbReference>
<dbReference type="Bgee" id="ENSG00000108179">
    <property type="expression patterns" value="Expressed in amniotic fluid and 205 other cell types or tissues"/>
</dbReference>
<dbReference type="ExpressionAtlas" id="P30405">
    <property type="expression patterns" value="baseline and differential"/>
</dbReference>
<dbReference type="GO" id="GO:0005737">
    <property type="term" value="C:cytoplasm"/>
    <property type="evidence" value="ECO:0000318"/>
    <property type="project" value="GO_Central"/>
</dbReference>
<dbReference type="GO" id="GO:0016020">
    <property type="term" value="C:membrane"/>
    <property type="evidence" value="ECO:0000304"/>
    <property type="project" value="ProtInc"/>
</dbReference>
<dbReference type="GO" id="GO:0005759">
    <property type="term" value="C:mitochondrial matrix"/>
    <property type="evidence" value="ECO:0007669"/>
    <property type="project" value="UniProtKB-SubCell"/>
</dbReference>
<dbReference type="GO" id="GO:0005757">
    <property type="term" value="C:mitochondrial permeability transition pore complex"/>
    <property type="evidence" value="ECO:0000314"/>
    <property type="project" value="UniProtKB"/>
</dbReference>
<dbReference type="GO" id="GO:0005739">
    <property type="term" value="C:mitochondrion"/>
    <property type="evidence" value="ECO:0000314"/>
    <property type="project" value="HPA"/>
</dbReference>
<dbReference type="GO" id="GO:0016018">
    <property type="term" value="F:cyclosporin A binding"/>
    <property type="evidence" value="ECO:0000318"/>
    <property type="project" value="GO_Central"/>
</dbReference>
<dbReference type="GO" id="GO:0003755">
    <property type="term" value="F:peptidyl-prolyl cis-trans isomerase activity"/>
    <property type="evidence" value="ECO:0000314"/>
    <property type="project" value="UniProtKB"/>
</dbReference>
<dbReference type="GO" id="GO:0008637">
    <property type="term" value="P:apoptotic mitochondrial changes"/>
    <property type="evidence" value="ECO:0007669"/>
    <property type="project" value="Ensembl"/>
</dbReference>
<dbReference type="GO" id="GO:0071243">
    <property type="term" value="P:cellular response to arsenic-containing substance"/>
    <property type="evidence" value="ECO:0000250"/>
    <property type="project" value="UniProtKB"/>
</dbReference>
<dbReference type="GO" id="GO:0071277">
    <property type="term" value="P:cellular response to calcium ion"/>
    <property type="evidence" value="ECO:0000250"/>
    <property type="project" value="UniProtKB"/>
</dbReference>
<dbReference type="GO" id="GO:0070301">
    <property type="term" value="P:cellular response to hydrogen peroxide"/>
    <property type="evidence" value="ECO:0000315"/>
    <property type="project" value="UniProtKB"/>
</dbReference>
<dbReference type="GO" id="GO:0051882">
    <property type="term" value="P:mitochondrial depolarization"/>
    <property type="evidence" value="ECO:0007669"/>
    <property type="project" value="Ensembl"/>
</dbReference>
<dbReference type="GO" id="GO:1902686">
    <property type="term" value="P:mitochondrial outer membrane permeabilization involved in programmed cell death"/>
    <property type="evidence" value="ECO:0000315"/>
    <property type="project" value="UniProtKB"/>
</dbReference>
<dbReference type="GO" id="GO:0070266">
    <property type="term" value="P:necroptotic process"/>
    <property type="evidence" value="ECO:0007669"/>
    <property type="project" value="Ensembl"/>
</dbReference>
<dbReference type="GO" id="GO:0043066">
    <property type="term" value="P:negative regulation of apoptotic process"/>
    <property type="evidence" value="ECO:0000314"/>
    <property type="project" value="UniProtKB"/>
</dbReference>
<dbReference type="GO" id="GO:0032780">
    <property type="term" value="P:negative regulation of ATP-dependent activity"/>
    <property type="evidence" value="ECO:0000250"/>
    <property type="project" value="UniProtKB"/>
</dbReference>
<dbReference type="GO" id="GO:2001243">
    <property type="term" value="P:negative regulation of intrinsic apoptotic signaling pathway"/>
    <property type="evidence" value="ECO:0000315"/>
    <property type="project" value="UniProtKB"/>
</dbReference>
<dbReference type="GO" id="GO:0090324">
    <property type="term" value="P:negative regulation of oxidative phosphorylation"/>
    <property type="evidence" value="ECO:0000250"/>
    <property type="project" value="UniProtKB"/>
</dbReference>
<dbReference type="GO" id="GO:2000276">
    <property type="term" value="P:negative regulation of oxidative phosphorylation uncoupler activity"/>
    <property type="evidence" value="ECO:0000250"/>
    <property type="project" value="UniProtKB"/>
</dbReference>
<dbReference type="GO" id="GO:0090201">
    <property type="term" value="P:negative regulation of release of cytochrome c from mitochondria"/>
    <property type="evidence" value="ECO:0000314"/>
    <property type="project" value="UniProtKB"/>
</dbReference>
<dbReference type="GO" id="GO:0006457">
    <property type="term" value="P:protein folding"/>
    <property type="evidence" value="ECO:0000318"/>
    <property type="project" value="GO_Central"/>
</dbReference>
<dbReference type="GO" id="GO:0046902">
    <property type="term" value="P:regulation of mitochondrial membrane permeability"/>
    <property type="evidence" value="ECO:0000315"/>
    <property type="project" value="UniProtKB"/>
</dbReference>
<dbReference type="GO" id="GO:1902445">
    <property type="term" value="P:regulation of mitochondrial membrane permeability involved in programmed necrotic cell death"/>
    <property type="evidence" value="ECO:0000315"/>
    <property type="project" value="UniProtKB"/>
</dbReference>
<dbReference type="GO" id="GO:0010849">
    <property type="term" value="P:regulation of proton-transporting ATPase activity, rotational mechanism"/>
    <property type="evidence" value="ECO:0000250"/>
    <property type="project" value="UniProtKB"/>
</dbReference>
<dbReference type="GO" id="GO:0002931">
    <property type="term" value="P:response to ischemia"/>
    <property type="evidence" value="ECO:0000250"/>
    <property type="project" value="UniProtKB"/>
</dbReference>
<dbReference type="GO" id="GO:0098528">
    <property type="term" value="P:skeletal muscle fiber differentiation"/>
    <property type="evidence" value="ECO:0007669"/>
    <property type="project" value="Ensembl"/>
</dbReference>
<dbReference type="CDD" id="cd01926">
    <property type="entry name" value="cyclophilin_ABH_like"/>
    <property type="match status" value="1"/>
</dbReference>
<dbReference type="FunFam" id="2.40.100.10:FF:000002">
    <property type="entry name" value="Peptidyl-prolyl cis-trans isomerase"/>
    <property type="match status" value="1"/>
</dbReference>
<dbReference type="Gene3D" id="2.40.100.10">
    <property type="entry name" value="Cyclophilin-like"/>
    <property type="match status" value="1"/>
</dbReference>
<dbReference type="InterPro" id="IPR029000">
    <property type="entry name" value="Cyclophilin-like_dom_sf"/>
</dbReference>
<dbReference type="InterPro" id="IPR020892">
    <property type="entry name" value="Cyclophilin-type_PPIase_CS"/>
</dbReference>
<dbReference type="InterPro" id="IPR002130">
    <property type="entry name" value="Cyclophilin-type_PPIase_dom"/>
</dbReference>
<dbReference type="PANTHER" id="PTHR11071">
    <property type="entry name" value="PEPTIDYL-PROLYL CIS-TRANS ISOMERASE"/>
    <property type="match status" value="1"/>
</dbReference>
<dbReference type="PANTHER" id="PTHR11071:SF408">
    <property type="entry name" value="PEPTIDYL-PROLYL CIS-TRANS ISOMERASE F, MITOCHONDRIAL"/>
    <property type="match status" value="1"/>
</dbReference>
<dbReference type="Pfam" id="PF00160">
    <property type="entry name" value="Pro_isomerase"/>
    <property type="match status" value="1"/>
</dbReference>
<dbReference type="PRINTS" id="PR00153">
    <property type="entry name" value="CSAPPISMRASE"/>
</dbReference>
<dbReference type="SUPFAM" id="SSF50891">
    <property type="entry name" value="Cyclophilin-like"/>
    <property type="match status" value="1"/>
</dbReference>
<dbReference type="PROSITE" id="PS00170">
    <property type="entry name" value="CSA_PPIASE_1"/>
    <property type="match status" value="1"/>
</dbReference>
<dbReference type="PROSITE" id="PS50072">
    <property type="entry name" value="CSA_PPIASE_2"/>
    <property type="match status" value="1"/>
</dbReference>
<gene>
    <name type="primary">PPIF</name>
    <name type="synonym">CYP3</name>
</gene>
<keyword id="KW-0002">3D-structure</keyword>
<keyword id="KW-0007">Acetylation</keyword>
<keyword id="KW-0025">Alternative splicing</keyword>
<keyword id="KW-0053">Apoptosis</keyword>
<keyword id="KW-0413">Isomerase</keyword>
<keyword id="KW-0496">Mitochondrion</keyword>
<keyword id="KW-1210">Necrosis</keyword>
<keyword id="KW-1267">Proteomics identification</keyword>
<keyword id="KW-1185">Reference proteome</keyword>
<keyword id="KW-0697">Rotamase</keyword>
<keyword id="KW-0702">S-nitrosylation</keyword>
<keyword id="KW-0809">Transit peptide</keyword>
<evidence type="ECO:0000250" key="1">
    <source>
        <dbReference type="UniProtKB" id="P29117"/>
    </source>
</evidence>
<evidence type="ECO:0000250" key="2">
    <source>
        <dbReference type="UniProtKB" id="P30404"/>
    </source>
</evidence>
<evidence type="ECO:0000250" key="3">
    <source>
        <dbReference type="UniProtKB" id="Q99KR7"/>
    </source>
</evidence>
<evidence type="ECO:0000255" key="4"/>
<evidence type="ECO:0000255" key="5">
    <source>
        <dbReference type="PROSITE-ProRule" id="PRU00156"/>
    </source>
</evidence>
<evidence type="ECO:0000269" key="6">
    <source>
    </source>
</evidence>
<evidence type="ECO:0000269" key="7">
    <source>
    </source>
</evidence>
<evidence type="ECO:0000269" key="8">
    <source>
    </source>
</evidence>
<evidence type="ECO:0000269" key="9">
    <source>
    </source>
</evidence>
<evidence type="ECO:0000269" key="10">
    <source>
    </source>
</evidence>
<evidence type="ECO:0000269" key="11">
    <source>
    </source>
</evidence>
<evidence type="ECO:0000269" key="12">
    <source>
    </source>
</evidence>
<evidence type="ECO:0000269" key="13">
    <source>
    </source>
</evidence>
<evidence type="ECO:0000303" key="14">
    <source>
    </source>
</evidence>
<evidence type="ECO:0000303" key="15">
    <source>
    </source>
</evidence>
<evidence type="ECO:0000305" key="16"/>
<evidence type="ECO:0007829" key="17">
    <source>
        <dbReference type="PDB" id="2Z6W"/>
    </source>
</evidence>
<evidence type="ECO:0007829" key="18">
    <source>
        <dbReference type="PDB" id="7PMT"/>
    </source>
</evidence>
<evidence type="ECO:0007829" key="19">
    <source>
        <dbReference type="PDB" id="7R2H"/>
    </source>
</evidence>
<protein>
    <recommendedName>
        <fullName>Peptidyl-prolyl cis-trans isomerase F, mitochondrial</fullName>
        <shortName>PPIase F</shortName>
        <ecNumber evidence="8">5.2.1.8</ecNumber>
    </recommendedName>
    <alternativeName>
        <fullName>Cyclophilin D</fullName>
        <shortName>CyP-D</shortName>
        <shortName>CypD</shortName>
    </alternativeName>
    <alternativeName>
        <fullName>Cyclophilin F</fullName>
    </alternativeName>
    <alternativeName>
        <fullName>Mitochondrial cyclophilin</fullName>
        <shortName>CyP-M</shortName>
    </alternativeName>
    <alternativeName>
        <fullName>Rotamase F</fullName>
    </alternativeName>
</protein>
<reference key="1">
    <citation type="journal article" date="1991" name="J. Biol. Chem.">
        <title>The cyclophilin multigene family of peptidyl-prolyl isomerases. Characterization of three separate human isoforms.</title>
        <authorList>
            <person name="Bergsma D.J."/>
            <person name="Eder C."/>
            <person name="Gross M."/>
            <person name="Kersten H."/>
            <person name="Sylvester D."/>
            <person name="Appelbaum E."/>
            <person name="Cusimano D."/>
            <person name="Livi G.P."/>
            <person name="McLauglin M.M."/>
            <person name="Kasyan K."/>
            <person name="Porter T.G."/>
            <person name="Silverman C."/>
            <person name="Dunnington D."/>
            <person name="Hand A."/>
            <person name="Prichett W.P."/>
            <person name="Bossard M.J."/>
            <person name="Brandt M."/>
            <person name="Levy M.A."/>
        </authorList>
    </citation>
    <scope>NUCLEOTIDE SEQUENCE [MRNA] (ISOFORM 1)</scope>
</reference>
<reference key="2">
    <citation type="journal article" date="2004" name="Nat. Genet.">
        <title>Complete sequencing and characterization of 21,243 full-length human cDNAs.</title>
        <authorList>
            <person name="Ota T."/>
            <person name="Suzuki Y."/>
            <person name="Nishikawa T."/>
            <person name="Otsuki T."/>
            <person name="Sugiyama T."/>
            <person name="Irie R."/>
            <person name="Wakamatsu A."/>
            <person name="Hayashi K."/>
            <person name="Sato H."/>
            <person name="Nagai K."/>
            <person name="Kimura K."/>
            <person name="Makita H."/>
            <person name="Sekine M."/>
            <person name="Obayashi M."/>
            <person name="Nishi T."/>
            <person name="Shibahara T."/>
            <person name="Tanaka T."/>
            <person name="Ishii S."/>
            <person name="Yamamoto J."/>
            <person name="Saito K."/>
            <person name="Kawai Y."/>
            <person name="Isono Y."/>
            <person name="Nakamura Y."/>
            <person name="Nagahari K."/>
            <person name="Murakami K."/>
            <person name="Yasuda T."/>
            <person name="Iwayanagi T."/>
            <person name="Wagatsuma M."/>
            <person name="Shiratori A."/>
            <person name="Sudo H."/>
            <person name="Hosoiri T."/>
            <person name="Kaku Y."/>
            <person name="Kodaira H."/>
            <person name="Kondo H."/>
            <person name="Sugawara M."/>
            <person name="Takahashi M."/>
            <person name="Kanda K."/>
            <person name="Yokoi T."/>
            <person name="Furuya T."/>
            <person name="Kikkawa E."/>
            <person name="Omura Y."/>
            <person name="Abe K."/>
            <person name="Kamihara K."/>
            <person name="Katsuta N."/>
            <person name="Sato K."/>
            <person name="Tanikawa M."/>
            <person name="Yamazaki M."/>
            <person name="Ninomiya K."/>
            <person name="Ishibashi T."/>
            <person name="Yamashita H."/>
            <person name="Murakawa K."/>
            <person name="Fujimori K."/>
            <person name="Tanai H."/>
            <person name="Kimata M."/>
            <person name="Watanabe M."/>
            <person name="Hiraoka S."/>
            <person name="Chiba Y."/>
            <person name="Ishida S."/>
            <person name="Ono Y."/>
            <person name="Takiguchi S."/>
            <person name="Watanabe S."/>
            <person name="Yosida M."/>
            <person name="Hotuta T."/>
            <person name="Kusano J."/>
            <person name="Kanehori K."/>
            <person name="Takahashi-Fujii A."/>
            <person name="Hara H."/>
            <person name="Tanase T.-O."/>
            <person name="Nomura Y."/>
            <person name="Togiya S."/>
            <person name="Komai F."/>
            <person name="Hara R."/>
            <person name="Takeuchi K."/>
            <person name="Arita M."/>
            <person name="Imose N."/>
            <person name="Musashino K."/>
            <person name="Yuuki H."/>
            <person name="Oshima A."/>
            <person name="Sasaki N."/>
            <person name="Aotsuka S."/>
            <person name="Yoshikawa Y."/>
            <person name="Matsunawa H."/>
            <person name="Ichihara T."/>
            <person name="Shiohata N."/>
            <person name="Sano S."/>
            <person name="Moriya S."/>
            <person name="Momiyama H."/>
            <person name="Satoh N."/>
            <person name="Takami S."/>
            <person name="Terashima Y."/>
            <person name="Suzuki O."/>
            <person name="Nakagawa S."/>
            <person name="Senoh A."/>
            <person name="Mizoguchi H."/>
            <person name="Goto Y."/>
            <person name="Shimizu F."/>
            <person name="Wakebe H."/>
            <person name="Hishigaki H."/>
            <person name="Watanabe T."/>
            <person name="Sugiyama A."/>
            <person name="Takemoto M."/>
            <person name="Kawakami B."/>
            <person name="Yamazaki M."/>
            <person name="Watanabe K."/>
            <person name="Kumagai A."/>
            <person name="Itakura S."/>
            <person name="Fukuzumi Y."/>
            <person name="Fujimori Y."/>
            <person name="Komiyama M."/>
            <person name="Tashiro H."/>
            <person name="Tanigami A."/>
            <person name="Fujiwara T."/>
            <person name="Ono T."/>
            <person name="Yamada K."/>
            <person name="Fujii Y."/>
            <person name="Ozaki K."/>
            <person name="Hirao M."/>
            <person name="Ohmori Y."/>
            <person name="Kawabata A."/>
            <person name="Hikiji T."/>
            <person name="Kobatake N."/>
            <person name="Inagaki H."/>
            <person name="Ikema Y."/>
            <person name="Okamoto S."/>
            <person name="Okitani R."/>
            <person name="Kawakami T."/>
            <person name="Noguchi S."/>
            <person name="Itoh T."/>
            <person name="Shigeta K."/>
            <person name="Senba T."/>
            <person name="Matsumura K."/>
            <person name="Nakajima Y."/>
            <person name="Mizuno T."/>
            <person name="Morinaga M."/>
            <person name="Sasaki M."/>
            <person name="Togashi T."/>
            <person name="Oyama M."/>
            <person name="Hata H."/>
            <person name="Watanabe M."/>
            <person name="Komatsu T."/>
            <person name="Mizushima-Sugano J."/>
            <person name="Satoh T."/>
            <person name="Shirai Y."/>
            <person name="Takahashi Y."/>
            <person name="Nakagawa K."/>
            <person name="Okumura K."/>
            <person name="Nagase T."/>
            <person name="Nomura N."/>
            <person name="Kikuchi H."/>
            <person name="Masuho Y."/>
            <person name="Yamashita R."/>
            <person name="Nakai K."/>
            <person name="Yada T."/>
            <person name="Nakamura Y."/>
            <person name="Ohara O."/>
            <person name="Isogai T."/>
            <person name="Sugano S."/>
        </authorList>
    </citation>
    <scope>NUCLEOTIDE SEQUENCE [LARGE SCALE MRNA] (ISOFORM 2)</scope>
    <source>
        <tissue>Umbilical cord blood</tissue>
    </source>
</reference>
<reference key="3">
    <citation type="journal article" date="2004" name="Nature">
        <title>The DNA sequence and comparative analysis of human chromosome 10.</title>
        <authorList>
            <person name="Deloukas P."/>
            <person name="Earthrowl M.E."/>
            <person name="Grafham D.V."/>
            <person name="Rubenfield M."/>
            <person name="French L."/>
            <person name="Steward C.A."/>
            <person name="Sims S.K."/>
            <person name="Jones M.C."/>
            <person name="Searle S."/>
            <person name="Scott C."/>
            <person name="Howe K."/>
            <person name="Hunt S.E."/>
            <person name="Andrews T.D."/>
            <person name="Gilbert J.G.R."/>
            <person name="Swarbreck D."/>
            <person name="Ashurst J.L."/>
            <person name="Taylor A."/>
            <person name="Battles J."/>
            <person name="Bird C.P."/>
            <person name="Ainscough R."/>
            <person name="Almeida J.P."/>
            <person name="Ashwell R.I.S."/>
            <person name="Ambrose K.D."/>
            <person name="Babbage A.K."/>
            <person name="Bagguley C.L."/>
            <person name="Bailey J."/>
            <person name="Banerjee R."/>
            <person name="Bates K."/>
            <person name="Beasley H."/>
            <person name="Bray-Allen S."/>
            <person name="Brown A.J."/>
            <person name="Brown J.Y."/>
            <person name="Burford D.C."/>
            <person name="Burrill W."/>
            <person name="Burton J."/>
            <person name="Cahill P."/>
            <person name="Camire D."/>
            <person name="Carter N.P."/>
            <person name="Chapman J.C."/>
            <person name="Clark S.Y."/>
            <person name="Clarke G."/>
            <person name="Clee C.M."/>
            <person name="Clegg S."/>
            <person name="Corby N."/>
            <person name="Coulson A."/>
            <person name="Dhami P."/>
            <person name="Dutta I."/>
            <person name="Dunn M."/>
            <person name="Faulkner L."/>
            <person name="Frankish A."/>
            <person name="Frankland J.A."/>
            <person name="Garner P."/>
            <person name="Garnett J."/>
            <person name="Gribble S."/>
            <person name="Griffiths C."/>
            <person name="Grocock R."/>
            <person name="Gustafson E."/>
            <person name="Hammond S."/>
            <person name="Harley J.L."/>
            <person name="Hart E."/>
            <person name="Heath P.D."/>
            <person name="Ho T.P."/>
            <person name="Hopkins B."/>
            <person name="Horne J."/>
            <person name="Howden P.J."/>
            <person name="Huckle E."/>
            <person name="Hynds C."/>
            <person name="Johnson C."/>
            <person name="Johnson D."/>
            <person name="Kana A."/>
            <person name="Kay M."/>
            <person name="Kimberley A.M."/>
            <person name="Kershaw J.K."/>
            <person name="Kokkinaki M."/>
            <person name="Laird G.K."/>
            <person name="Lawlor S."/>
            <person name="Lee H.M."/>
            <person name="Leongamornlert D.A."/>
            <person name="Laird G."/>
            <person name="Lloyd C."/>
            <person name="Lloyd D.M."/>
            <person name="Loveland J."/>
            <person name="Lovell J."/>
            <person name="McLaren S."/>
            <person name="McLay K.E."/>
            <person name="McMurray A."/>
            <person name="Mashreghi-Mohammadi M."/>
            <person name="Matthews L."/>
            <person name="Milne S."/>
            <person name="Nickerson T."/>
            <person name="Nguyen M."/>
            <person name="Overton-Larty E."/>
            <person name="Palmer S.A."/>
            <person name="Pearce A.V."/>
            <person name="Peck A.I."/>
            <person name="Pelan S."/>
            <person name="Phillimore B."/>
            <person name="Porter K."/>
            <person name="Rice C.M."/>
            <person name="Rogosin A."/>
            <person name="Ross M.T."/>
            <person name="Sarafidou T."/>
            <person name="Sehra H.K."/>
            <person name="Shownkeen R."/>
            <person name="Skuce C.D."/>
            <person name="Smith M."/>
            <person name="Standring L."/>
            <person name="Sycamore N."/>
            <person name="Tester J."/>
            <person name="Thorpe A."/>
            <person name="Torcasso W."/>
            <person name="Tracey A."/>
            <person name="Tromans A."/>
            <person name="Tsolas J."/>
            <person name="Wall M."/>
            <person name="Walsh J."/>
            <person name="Wang H."/>
            <person name="Weinstock K."/>
            <person name="West A.P."/>
            <person name="Willey D.L."/>
            <person name="Whitehead S.L."/>
            <person name="Wilming L."/>
            <person name="Wray P.W."/>
            <person name="Young L."/>
            <person name="Chen Y."/>
            <person name="Lovering R.C."/>
            <person name="Moschonas N.K."/>
            <person name="Siebert R."/>
            <person name="Fechtel K."/>
            <person name="Bentley D."/>
            <person name="Durbin R.M."/>
            <person name="Hubbard T."/>
            <person name="Doucette-Stamm L."/>
            <person name="Beck S."/>
            <person name="Smith D.R."/>
            <person name="Rogers J."/>
        </authorList>
    </citation>
    <scope>NUCLEOTIDE SEQUENCE [LARGE SCALE GENOMIC DNA]</scope>
</reference>
<reference key="4">
    <citation type="submission" date="2005-07" db="EMBL/GenBank/DDBJ databases">
        <authorList>
            <person name="Mural R.J."/>
            <person name="Istrail S."/>
            <person name="Sutton G."/>
            <person name="Florea L."/>
            <person name="Halpern A.L."/>
            <person name="Mobarry C.M."/>
            <person name="Lippert R."/>
            <person name="Walenz B."/>
            <person name="Shatkay H."/>
            <person name="Dew I."/>
            <person name="Miller J.R."/>
            <person name="Flanigan M.J."/>
            <person name="Edwards N.J."/>
            <person name="Bolanos R."/>
            <person name="Fasulo D."/>
            <person name="Halldorsson B.V."/>
            <person name="Hannenhalli S."/>
            <person name="Turner R."/>
            <person name="Yooseph S."/>
            <person name="Lu F."/>
            <person name="Nusskern D.R."/>
            <person name="Shue B.C."/>
            <person name="Zheng X.H."/>
            <person name="Zhong F."/>
            <person name="Delcher A.L."/>
            <person name="Huson D.H."/>
            <person name="Kravitz S.A."/>
            <person name="Mouchard L."/>
            <person name="Reinert K."/>
            <person name="Remington K.A."/>
            <person name="Clark A.G."/>
            <person name="Waterman M.S."/>
            <person name="Eichler E.E."/>
            <person name="Adams M.D."/>
            <person name="Hunkapiller M.W."/>
            <person name="Myers E.W."/>
            <person name="Venter J.C."/>
        </authorList>
    </citation>
    <scope>NUCLEOTIDE SEQUENCE [LARGE SCALE GENOMIC DNA]</scope>
</reference>
<reference key="5">
    <citation type="journal article" date="2004" name="Genome Res.">
        <title>The status, quality, and expansion of the NIH full-length cDNA project: the Mammalian Gene Collection (MGC).</title>
        <authorList>
            <consortium name="The MGC Project Team"/>
        </authorList>
    </citation>
    <scope>NUCLEOTIDE SEQUENCE [LARGE SCALE MRNA] (ISOFORMS 1 AND 2)</scope>
    <source>
        <tissue>Blood</tissue>
        <tissue>Ovary</tissue>
    </source>
</reference>
<reference key="6">
    <citation type="journal article" date="1999" name="Eur. J. Biochem.">
        <title>Import and processing of heart mitochondrial cyclophilin D.</title>
        <authorList>
            <person name="Johnson N."/>
            <person name="Khan A."/>
            <person name="Virji S."/>
            <person name="Ward J.M."/>
            <person name="Crompton M."/>
        </authorList>
    </citation>
    <scope>SUBCELLULAR LOCATION</scope>
</reference>
<reference key="7">
    <citation type="journal article" date="2009" name="J. Biol. Chem.">
        <title>Cyclophilin D interacts with Bcl2 and exerts an anti-apoptotic effect.</title>
        <authorList>
            <person name="Eliseev R.A."/>
            <person name="Malecki J."/>
            <person name="Lester T."/>
            <person name="Zhang Y."/>
            <person name="Humphrey J."/>
            <person name="Gunter T.E."/>
        </authorList>
    </citation>
    <scope>FUNCTION</scope>
    <scope>INTERACTION WITH BCL2</scope>
</reference>
<reference key="8">
    <citation type="journal article" date="2010" name="PLoS Biol.">
        <title>Structural and biochemical characterization of the human cyclophilin family of peptidyl-prolyl isomerases.</title>
        <authorList>
            <person name="Davis T.L."/>
            <person name="Walker J.R."/>
            <person name="Campagna-Slater V."/>
            <person name="Finerty P.J."/>
            <person name="Paramanathan R."/>
            <person name="Bernstein G."/>
            <person name="MacKenzie F."/>
            <person name="Tempel W."/>
            <person name="Ouyang H."/>
            <person name="Lee W.H."/>
            <person name="Eisenmesser E.Z."/>
            <person name="Dhe-Paganon S."/>
        </authorList>
    </citation>
    <scope>FUNCTION</scope>
    <scope>CATALYTIC ACTIVITY</scope>
    <scope>ACTIVITY REGULATION</scope>
</reference>
<reference key="9">
    <citation type="journal article" date="2011" name="BMC Syst. Biol.">
        <title>Initial characterization of the human central proteome.</title>
        <authorList>
            <person name="Burkard T.R."/>
            <person name="Planyavsky M."/>
            <person name="Kaupe I."/>
            <person name="Breitwieser F.P."/>
            <person name="Buerckstuemmer T."/>
            <person name="Bennett K.L."/>
            <person name="Superti-Furga G."/>
            <person name="Colinge J."/>
        </authorList>
    </citation>
    <scope>IDENTIFICATION BY MASS SPECTROMETRY [LARGE SCALE ANALYSIS]</scope>
</reference>
<reference key="10">
    <citation type="journal article" date="2011" name="Biochem. J.">
        <title>Complement 1q-binding protein inhibits the mitochondrial permeability transition pore and protects against oxidative stress-induced death.</title>
        <authorList>
            <person name="McGee A.M."/>
            <person name="Baines C.P."/>
        </authorList>
    </citation>
    <scope>INTERACTION WITH C1QBP</scope>
</reference>
<reference key="11">
    <citation type="journal article" date="2011" name="J. Biol. Chem.">
        <title>Cysteine 203 of cyclophilin D is critical for cyclophilin D activation of the mitochondrial permeability transition pore.</title>
        <authorList>
            <person name="Nguyen T.T."/>
            <person name="Stevens M.V."/>
            <person name="Kohr M."/>
            <person name="Steenbergen C."/>
            <person name="Sack M.N."/>
            <person name="Murphy E."/>
        </authorList>
    </citation>
    <scope>MUTAGENESIS OF CYS-203</scope>
</reference>
<reference key="12">
    <citation type="journal article" date="2012" name="Cell">
        <title>p53 opens the mitochondrial permeability transition pore to trigger necrosis.</title>
        <authorList>
            <person name="Vaseva A.V."/>
            <person name="Marchenko N.D."/>
            <person name="Ji K."/>
            <person name="Tsirka S.E."/>
            <person name="Holzmann S."/>
            <person name="Moll U.M."/>
        </authorList>
    </citation>
    <scope>FUNCTION</scope>
    <scope>INTERACTION WITH TP53</scope>
</reference>
<reference key="13">
    <citation type="journal article" date="2015" name="Mol. Cell">
        <title>SPG7 is an essential and conserved component of the mitochondrial permeability transition pore.</title>
        <authorList>
            <person name="Shanmughapriya S."/>
            <person name="Rajan S."/>
            <person name="Hoffman N.E."/>
            <person name="Higgins A.M."/>
            <person name="Tomar D."/>
            <person name="Nemani N."/>
            <person name="Hines K.J."/>
            <person name="Smith D.J."/>
            <person name="Eguchi A."/>
            <person name="Vallem S."/>
            <person name="Shaikh F."/>
            <person name="Cheung M."/>
            <person name="Leonard N.J."/>
            <person name="Stolakis R.S."/>
            <person name="Wolfers M.P."/>
            <person name="Ibetti J."/>
            <person name="Chuprun J.K."/>
            <person name="Jog N.R."/>
            <person name="Houser S.R."/>
            <person name="Koch W.J."/>
            <person name="Elrod J.W."/>
            <person name="Madesh M."/>
        </authorList>
    </citation>
    <scope>FUNCTION</scope>
    <scope>IDENTIFICATION IN THE MITOCHONDRIAL PERMEABILITY TRANSITION PORE COMPLEX</scope>
    <scope>INTERACTION WITH SPG7</scope>
</reference>
<reference key="14">
    <citation type="journal article" date="2015" name="Proteomics">
        <title>N-terminome analysis of the human mitochondrial proteome.</title>
        <authorList>
            <person name="Vaca Jacome A.S."/>
            <person name="Rabilloud T."/>
            <person name="Schaeffer-Reiss C."/>
            <person name="Rompais M."/>
            <person name="Ayoub D."/>
            <person name="Lane L."/>
            <person name="Bairoch A."/>
            <person name="Van Dorsselaer A."/>
            <person name="Carapito C."/>
        </authorList>
    </citation>
    <scope>IDENTIFICATION BY MASS SPECTROMETRY [LARGE SCALE ANALYSIS]</scope>
</reference>
<reference key="15">
    <citation type="journal article" date="2016" name="Proc. Natl. Acad. Sci. U.S.A.">
        <title>Mitochondrial calcium uniporter regulator 1 (MCUR1) regulates the calcium threshold for the mitochondrial permeability transition.</title>
        <authorList>
            <person name="Chaudhuri D."/>
            <person name="Artiga D.J."/>
            <person name="Abiria S.A."/>
            <person name="Clapham D.E."/>
        </authorList>
    </citation>
    <scope>INTERACTION WITH MCUR1</scope>
</reference>
<reference key="16">
    <citation type="journal article" date="2005" name="Acta Crystallogr. D">
        <title>Crystal engineering yields crystals of cyclophilin D diffracting to 1.7 A resolution.</title>
        <authorList>
            <person name="Schlatter D."/>
            <person name="Thoma R."/>
            <person name="Kung E."/>
            <person name="Stihle M."/>
            <person name="Muller F."/>
            <person name="Borroni E."/>
            <person name="Cesura A."/>
            <person name="Hennig M."/>
        </authorList>
    </citation>
    <scope>X-RAY CRYSTALLOGRAPHY (1.71 ANGSTROMS) OF 43-207</scope>
</reference>
<reference key="17">
    <citation type="journal article" date="2008" name="Proteins">
        <title>Crystal structure of human cyclophilin D in complex with its inhibitor, cyclosporin A at 0.96-A resolution.</title>
        <authorList>
            <person name="Kajitani K."/>
            <person name="Fujihashi M."/>
            <person name="Kobayashi Y."/>
            <person name="Shimizu S."/>
            <person name="Tsujimoto Y."/>
            <person name="Miki K."/>
        </authorList>
    </citation>
    <scope>X-RAY CRYSTALLOGRAPHY (0.96 ANGSTROMS) OF 44-207 IN COMPLEX WITH CYCLOSPORIN A</scope>
</reference>
<reference key="18">
    <citation type="journal article" date="2011" name="Acta Crystallogr. D">
        <title>In-plate protein crystallization, in situ ligand soaking and X-ray diffraction.</title>
        <authorList>
            <person name="le Maire A."/>
            <person name="Gelin M."/>
            <person name="Pochet S."/>
            <person name="Hoh F."/>
            <person name="Pirocchi M."/>
            <person name="Guichou J.F."/>
            <person name="Ferrer J.L."/>
            <person name="Labesse G."/>
        </authorList>
    </citation>
    <scope>X-RAY CRYSTALLOGRAPHY (1.54 ANGSTROMS) OF 44-207</scope>
</reference>
<sequence>MLALRCGSRWLGLLSVPRSVPLRLPAARACSKGSGDPSSSSSSGNPLVYLDVDANGKPLGRVVLELKADVVPKTAENFRALCTGEKGFGYKGSTFHRVIPSFMCQAGDFTNHNGTGGKSIYGSRFPDENFTLKHVGPGVLSMANAGPNTNGSQFFICTIKTDWLDGKHVVFGHVKEGMDVVKKIESFGSKSGRTSKKIVITDCGQLS</sequence>
<accession>P30405</accession>
<accession>Q2YDB7</accession>
<accession>Q5W131</accession>